<proteinExistence type="inferred from homology"/>
<gene>
    <name evidence="1" type="primary">mnmA</name>
    <name type="ordered locus">SFV_1168</name>
</gene>
<sequence>MSETAKKVIVGMSGGVDSSVSAWLLQQQGYQVEGLFMKNWEEDDGEEYCTAAADLADAQAVCDKLGIELHTVNFAAEYWDNVFELFLAEYKAGRTPNPDILCNKEIKFKAFLEFAAEDLGADYIATGHYVRRADVDGKSRLLRGLDSNKDQSYFLYTLSHEQIAQSLFPVGELEKPQVRKIAEDLGLVTAKKKDSTGICFIGERKFREFLGRYLPAQPGKIITVDGDEIGEHQGLMYHTLGQRKGLGIGGTKEGTEEPWYVVDKDVENNILVVAQGHEHPRLMSVGLIAQQLHWVDREPFTGTMRCTVKTRYRQTDIPCTVKALDDDRIKVIFDEPVAAVTPGQSAVFYNGEVCLGGGIIEQRLPLPV</sequence>
<dbReference type="EC" id="2.8.1.13" evidence="1"/>
<dbReference type="EMBL" id="CP000266">
    <property type="protein sequence ID" value="ABF03376.1"/>
    <property type="molecule type" value="Genomic_DNA"/>
</dbReference>
<dbReference type="RefSeq" id="WP_005047976.1">
    <property type="nucleotide sequence ID" value="NC_008258.1"/>
</dbReference>
<dbReference type="SMR" id="Q0T5N9"/>
<dbReference type="KEGG" id="sfv:SFV_1168"/>
<dbReference type="HOGENOM" id="CLU_035188_1_0_6"/>
<dbReference type="Proteomes" id="UP000000659">
    <property type="component" value="Chromosome"/>
</dbReference>
<dbReference type="GO" id="GO:0005737">
    <property type="term" value="C:cytoplasm"/>
    <property type="evidence" value="ECO:0007669"/>
    <property type="project" value="UniProtKB-SubCell"/>
</dbReference>
<dbReference type="GO" id="GO:0005524">
    <property type="term" value="F:ATP binding"/>
    <property type="evidence" value="ECO:0007669"/>
    <property type="project" value="UniProtKB-KW"/>
</dbReference>
<dbReference type="GO" id="GO:0000049">
    <property type="term" value="F:tRNA binding"/>
    <property type="evidence" value="ECO:0007669"/>
    <property type="project" value="UniProtKB-KW"/>
</dbReference>
<dbReference type="GO" id="GO:0103016">
    <property type="term" value="F:tRNA-uridine 2-sulfurtransferase activity"/>
    <property type="evidence" value="ECO:0007669"/>
    <property type="project" value="UniProtKB-EC"/>
</dbReference>
<dbReference type="GO" id="GO:0002143">
    <property type="term" value="P:tRNA wobble position uridine thiolation"/>
    <property type="evidence" value="ECO:0007669"/>
    <property type="project" value="TreeGrafter"/>
</dbReference>
<dbReference type="CDD" id="cd01998">
    <property type="entry name" value="MnmA_TRMU-like"/>
    <property type="match status" value="1"/>
</dbReference>
<dbReference type="FunFam" id="2.30.30.280:FF:000001">
    <property type="entry name" value="tRNA-specific 2-thiouridylase MnmA"/>
    <property type="match status" value="1"/>
</dbReference>
<dbReference type="FunFam" id="2.40.30.10:FF:000023">
    <property type="entry name" value="tRNA-specific 2-thiouridylase MnmA"/>
    <property type="match status" value="1"/>
</dbReference>
<dbReference type="FunFam" id="3.40.50.620:FF:000004">
    <property type="entry name" value="tRNA-specific 2-thiouridylase MnmA"/>
    <property type="match status" value="1"/>
</dbReference>
<dbReference type="Gene3D" id="2.30.30.280">
    <property type="entry name" value="Adenine nucleotide alpha hydrolases-like domains"/>
    <property type="match status" value="1"/>
</dbReference>
<dbReference type="Gene3D" id="3.40.50.620">
    <property type="entry name" value="HUPs"/>
    <property type="match status" value="1"/>
</dbReference>
<dbReference type="Gene3D" id="2.40.30.10">
    <property type="entry name" value="Translation factors"/>
    <property type="match status" value="1"/>
</dbReference>
<dbReference type="HAMAP" id="MF_00144">
    <property type="entry name" value="tRNA_thiouridyl_MnmA"/>
    <property type="match status" value="1"/>
</dbReference>
<dbReference type="InterPro" id="IPR004506">
    <property type="entry name" value="MnmA-like"/>
</dbReference>
<dbReference type="InterPro" id="IPR046885">
    <property type="entry name" value="MnmA-like_C"/>
</dbReference>
<dbReference type="InterPro" id="IPR046884">
    <property type="entry name" value="MnmA-like_central"/>
</dbReference>
<dbReference type="InterPro" id="IPR023382">
    <property type="entry name" value="MnmA-like_central_sf"/>
</dbReference>
<dbReference type="InterPro" id="IPR014729">
    <property type="entry name" value="Rossmann-like_a/b/a_fold"/>
</dbReference>
<dbReference type="NCBIfam" id="NF001138">
    <property type="entry name" value="PRK00143.1"/>
    <property type="match status" value="1"/>
</dbReference>
<dbReference type="NCBIfam" id="TIGR00420">
    <property type="entry name" value="trmU"/>
    <property type="match status" value="1"/>
</dbReference>
<dbReference type="PANTHER" id="PTHR11933:SF5">
    <property type="entry name" value="MITOCHONDRIAL TRNA-SPECIFIC 2-THIOURIDYLASE 1"/>
    <property type="match status" value="1"/>
</dbReference>
<dbReference type="PANTHER" id="PTHR11933">
    <property type="entry name" value="TRNA 5-METHYLAMINOMETHYL-2-THIOURIDYLATE -METHYLTRANSFERASE"/>
    <property type="match status" value="1"/>
</dbReference>
<dbReference type="Pfam" id="PF03054">
    <property type="entry name" value="tRNA_Me_trans"/>
    <property type="match status" value="1"/>
</dbReference>
<dbReference type="Pfam" id="PF20258">
    <property type="entry name" value="tRNA_Me_trans_C"/>
    <property type="match status" value="1"/>
</dbReference>
<dbReference type="Pfam" id="PF20259">
    <property type="entry name" value="tRNA_Me_trans_M"/>
    <property type="match status" value="1"/>
</dbReference>
<dbReference type="SUPFAM" id="SSF52402">
    <property type="entry name" value="Adenine nucleotide alpha hydrolases-like"/>
    <property type="match status" value="1"/>
</dbReference>
<accession>Q0T5N9</accession>
<feature type="chain" id="PRO_0000349799" description="tRNA-specific 2-thiouridylase MnmA">
    <location>
        <begin position="1"/>
        <end position="368"/>
    </location>
</feature>
<feature type="region of interest" description="Interaction with target base in tRNA" evidence="1">
    <location>
        <begin position="97"/>
        <end position="99"/>
    </location>
</feature>
<feature type="region of interest" description="Interaction with tRNA" evidence="1">
    <location>
        <begin position="149"/>
        <end position="151"/>
    </location>
</feature>
<feature type="region of interest" description="Interaction with tRNA" evidence="1">
    <location>
        <begin position="311"/>
        <end position="312"/>
    </location>
</feature>
<feature type="active site" description="Nucleophile" evidence="1">
    <location>
        <position position="102"/>
    </location>
</feature>
<feature type="active site" description="Cysteine persulfide intermediate" evidence="1">
    <location>
        <position position="199"/>
    </location>
</feature>
<feature type="binding site" evidence="1">
    <location>
        <begin position="11"/>
        <end position="18"/>
    </location>
    <ligand>
        <name>ATP</name>
        <dbReference type="ChEBI" id="CHEBI:30616"/>
    </ligand>
</feature>
<feature type="binding site" evidence="1">
    <location>
        <position position="37"/>
    </location>
    <ligand>
        <name>ATP</name>
        <dbReference type="ChEBI" id="CHEBI:30616"/>
    </ligand>
</feature>
<feature type="binding site" evidence="1">
    <location>
        <position position="127"/>
    </location>
    <ligand>
        <name>ATP</name>
        <dbReference type="ChEBI" id="CHEBI:30616"/>
    </ligand>
</feature>
<feature type="site" description="Interaction with tRNA" evidence="1">
    <location>
        <position position="128"/>
    </location>
</feature>
<feature type="site" description="Interaction with tRNA" evidence="1">
    <location>
        <position position="344"/>
    </location>
</feature>
<feature type="disulfide bond" description="Alternate" evidence="1">
    <location>
        <begin position="102"/>
        <end position="199"/>
    </location>
</feature>
<comment type="function">
    <text evidence="1">Catalyzes the 2-thiolation of uridine at the wobble position (U34) of tRNA(Lys), tRNA(Glu) and tRNA(Gln), leading to the formation of s(2)U34, the first step of tRNA-mnm(5)s(2)U34 synthesis. Sulfur is provided by IscS, via a sulfur-relay system. Binds ATP and its substrate tRNAs.</text>
</comment>
<comment type="catalytic activity">
    <reaction evidence="1">
        <text>S-sulfanyl-L-cysteinyl-[protein] + uridine(34) in tRNA + AH2 + ATP = 2-thiouridine(34) in tRNA + L-cysteinyl-[protein] + A + AMP + diphosphate + H(+)</text>
        <dbReference type="Rhea" id="RHEA:47032"/>
        <dbReference type="Rhea" id="RHEA-COMP:10131"/>
        <dbReference type="Rhea" id="RHEA-COMP:11726"/>
        <dbReference type="Rhea" id="RHEA-COMP:11727"/>
        <dbReference type="Rhea" id="RHEA-COMP:11728"/>
        <dbReference type="ChEBI" id="CHEBI:13193"/>
        <dbReference type="ChEBI" id="CHEBI:15378"/>
        <dbReference type="ChEBI" id="CHEBI:17499"/>
        <dbReference type="ChEBI" id="CHEBI:29950"/>
        <dbReference type="ChEBI" id="CHEBI:30616"/>
        <dbReference type="ChEBI" id="CHEBI:33019"/>
        <dbReference type="ChEBI" id="CHEBI:61963"/>
        <dbReference type="ChEBI" id="CHEBI:65315"/>
        <dbReference type="ChEBI" id="CHEBI:87170"/>
        <dbReference type="ChEBI" id="CHEBI:456215"/>
        <dbReference type="EC" id="2.8.1.13"/>
    </reaction>
</comment>
<comment type="subunit">
    <text evidence="1">Interacts with TusE.</text>
</comment>
<comment type="subcellular location">
    <subcellularLocation>
        <location evidence="1">Cytoplasm</location>
    </subcellularLocation>
</comment>
<comment type="similarity">
    <text evidence="1">Belongs to the MnmA/TRMU family.</text>
</comment>
<name>MNMA_SHIF8</name>
<protein>
    <recommendedName>
        <fullName evidence="1">tRNA-specific 2-thiouridylase MnmA</fullName>
        <ecNumber evidence="1">2.8.1.13</ecNumber>
    </recommendedName>
</protein>
<organism>
    <name type="scientific">Shigella flexneri serotype 5b (strain 8401)</name>
    <dbReference type="NCBI Taxonomy" id="373384"/>
    <lineage>
        <taxon>Bacteria</taxon>
        <taxon>Pseudomonadati</taxon>
        <taxon>Pseudomonadota</taxon>
        <taxon>Gammaproteobacteria</taxon>
        <taxon>Enterobacterales</taxon>
        <taxon>Enterobacteriaceae</taxon>
        <taxon>Shigella</taxon>
    </lineage>
</organism>
<keyword id="KW-0067">ATP-binding</keyword>
<keyword id="KW-0963">Cytoplasm</keyword>
<keyword id="KW-1015">Disulfide bond</keyword>
<keyword id="KW-0547">Nucleotide-binding</keyword>
<keyword id="KW-0694">RNA-binding</keyword>
<keyword id="KW-0808">Transferase</keyword>
<keyword id="KW-0819">tRNA processing</keyword>
<keyword id="KW-0820">tRNA-binding</keyword>
<evidence type="ECO:0000255" key="1">
    <source>
        <dbReference type="HAMAP-Rule" id="MF_00144"/>
    </source>
</evidence>
<reference key="1">
    <citation type="journal article" date="2006" name="BMC Genomics">
        <title>Complete genome sequence of Shigella flexneri 5b and comparison with Shigella flexneri 2a.</title>
        <authorList>
            <person name="Nie H."/>
            <person name="Yang F."/>
            <person name="Zhang X."/>
            <person name="Yang J."/>
            <person name="Chen L."/>
            <person name="Wang J."/>
            <person name="Xiong Z."/>
            <person name="Peng J."/>
            <person name="Sun L."/>
            <person name="Dong J."/>
            <person name="Xue Y."/>
            <person name="Xu X."/>
            <person name="Chen S."/>
            <person name="Yao Z."/>
            <person name="Shen Y."/>
            <person name="Jin Q."/>
        </authorList>
    </citation>
    <scope>NUCLEOTIDE SEQUENCE [LARGE SCALE GENOMIC DNA]</scope>
    <source>
        <strain>8401</strain>
    </source>
</reference>